<name>BCL6B_HUMAN</name>
<feature type="chain" id="PRO_0000047100" description="B-cell CLL/lymphoma 6 member B protein">
    <location>
        <begin position="1"/>
        <end position="479"/>
    </location>
</feature>
<feature type="domain" description="BTB" evidence="2">
    <location>
        <begin position="38"/>
        <end position="105"/>
    </location>
</feature>
<feature type="zinc finger region" description="C2H2-type 1" evidence="3">
    <location>
        <begin position="328"/>
        <end position="350"/>
    </location>
</feature>
<feature type="zinc finger region" description="C2H2-type 2" evidence="3">
    <location>
        <begin position="356"/>
        <end position="378"/>
    </location>
</feature>
<feature type="zinc finger region" description="C2H2-type 3" evidence="3">
    <location>
        <begin position="384"/>
        <end position="406"/>
    </location>
</feature>
<feature type="zinc finger region" description="C2H2-type 4" evidence="3">
    <location>
        <begin position="412"/>
        <end position="434"/>
    </location>
</feature>
<feature type="zinc finger region" description="C2H2-type 5" evidence="3">
    <location>
        <begin position="440"/>
        <end position="463"/>
    </location>
</feature>
<feature type="region of interest" description="Disordered" evidence="4">
    <location>
        <begin position="143"/>
        <end position="190"/>
    </location>
</feature>
<feature type="region of interest" description="Disordered" evidence="4">
    <location>
        <begin position="210"/>
        <end position="259"/>
    </location>
</feature>
<feature type="compositionally biased region" description="Pro residues" evidence="4">
    <location>
        <begin position="147"/>
        <end position="160"/>
    </location>
</feature>
<feature type="compositionally biased region" description="Basic and acidic residues" evidence="4">
    <location>
        <begin position="162"/>
        <end position="172"/>
    </location>
</feature>
<feature type="compositionally biased region" description="Low complexity" evidence="4">
    <location>
        <begin position="234"/>
        <end position="244"/>
    </location>
</feature>
<feature type="sequence conflict" description="In Ref. 1; BAC00962/BAC00963 and 3; AAH59404." evidence="6" ref="1 3">
    <original>S</original>
    <variation>SS</variation>
    <location>
        <position position="244"/>
    </location>
</feature>
<feature type="sequence conflict" description="In Ref. 3; AAH59404." evidence="6" ref="3">
    <original>C</original>
    <variation>S</variation>
    <location>
        <position position="306"/>
    </location>
</feature>
<keyword id="KW-0479">Metal-binding</keyword>
<keyword id="KW-0539">Nucleus</keyword>
<keyword id="KW-1267">Proteomics identification</keyword>
<keyword id="KW-1185">Reference proteome</keyword>
<keyword id="KW-0677">Repeat</keyword>
<keyword id="KW-0862">Zinc</keyword>
<keyword id="KW-0863">Zinc-finger</keyword>
<dbReference type="EMBL" id="AB076580">
    <property type="protein sequence ID" value="BAC00962.1"/>
    <property type="molecule type" value="mRNA"/>
</dbReference>
<dbReference type="EMBL" id="AB076581">
    <property type="protein sequence ID" value="BAC00963.1"/>
    <property type="molecule type" value="Genomic_DNA"/>
</dbReference>
<dbReference type="EMBL" id="AC040977">
    <property type="status" value="NOT_ANNOTATED_CDS"/>
    <property type="molecule type" value="Genomic_DNA"/>
</dbReference>
<dbReference type="EMBL" id="BC059404">
    <property type="protein sequence ID" value="AAH59404.1"/>
    <property type="molecule type" value="mRNA"/>
</dbReference>
<dbReference type="CCDS" id="CCDS42248.1"/>
<dbReference type="PIR" id="JC7812">
    <property type="entry name" value="JC7812"/>
</dbReference>
<dbReference type="RefSeq" id="NP_862827.2">
    <property type="nucleotide sequence ID" value="NM_181844.4"/>
</dbReference>
<dbReference type="SMR" id="Q8N143"/>
<dbReference type="BioGRID" id="129125">
    <property type="interactions" value="33"/>
</dbReference>
<dbReference type="FunCoup" id="Q8N143">
    <property type="interactions" value="190"/>
</dbReference>
<dbReference type="IntAct" id="Q8N143">
    <property type="interactions" value="3"/>
</dbReference>
<dbReference type="STRING" id="9606.ENSP00000293805"/>
<dbReference type="ChEMBL" id="CHEMBL5291528"/>
<dbReference type="GlyGen" id="Q8N143">
    <property type="glycosylation" value="2 sites"/>
</dbReference>
<dbReference type="iPTMnet" id="Q8N143"/>
<dbReference type="PhosphoSitePlus" id="Q8N143"/>
<dbReference type="BioMuta" id="BCL6B"/>
<dbReference type="DMDM" id="296434409"/>
<dbReference type="jPOST" id="Q8N143"/>
<dbReference type="MassIVE" id="Q8N143"/>
<dbReference type="PaxDb" id="9606-ENSP00000293805"/>
<dbReference type="PeptideAtlas" id="Q8N143"/>
<dbReference type="ProteomicsDB" id="71552"/>
<dbReference type="TopDownProteomics" id="Q8N143"/>
<dbReference type="Antibodypedia" id="23875">
    <property type="antibodies" value="72 antibodies from 22 providers"/>
</dbReference>
<dbReference type="DNASU" id="255877"/>
<dbReference type="Ensembl" id="ENST00000293805.10">
    <property type="protein sequence ID" value="ENSP00000293805.5"/>
    <property type="gene ID" value="ENSG00000161940.11"/>
</dbReference>
<dbReference type="GeneID" id="255877"/>
<dbReference type="KEGG" id="hsa:255877"/>
<dbReference type="MANE-Select" id="ENST00000293805.10">
    <property type="protein sequence ID" value="ENSP00000293805.5"/>
    <property type="RefSeq nucleotide sequence ID" value="NM_181844.4"/>
    <property type="RefSeq protein sequence ID" value="NP_862827.2"/>
</dbReference>
<dbReference type="UCSC" id="uc010clt.2">
    <property type="organism name" value="human"/>
</dbReference>
<dbReference type="AGR" id="HGNC:1002"/>
<dbReference type="CTD" id="255877"/>
<dbReference type="DisGeNET" id="255877"/>
<dbReference type="GeneCards" id="BCL6B"/>
<dbReference type="HGNC" id="HGNC:1002">
    <property type="gene designation" value="BCL6B"/>
</dbReference>
<dbReference type="HPA" id="ENSG00000161940">
    <property type="expression patterns" value="Low tissue specificity"/>
</dbReference>
<dbReference type="MIM" id="608992">
    <property type="type" value="gene"/>
</dbReference>
<dbReference type="neXtProt" id="NX_Q8N143"/>
<dbReference type="OpenTargets" id="ENSG00000161940"/>
<dbReference type="PharmGKB" id="PA25313"/>
<dbReference type="VEuPathDB" id="HostDB:ENSG00000161940"/>
<dbReference type="eggNOG" id="KOG1721">
    <property type="taxonomic scope" value="Eukaryota"/>
</dbReference>
<dbReference type="GeneTree" id="ENSGT00940000159844"/>
<dbReference type="HOGENOM" id="CLU_024196_2_0_1"/>
<dbReference type="InParanoid" id="Q8N143"/>
<dbReference type="OMA" id="VCGARFN"/>
<dbReference type="OrthoDB" id="5560627at2759"/>
<dbReference type="PAN-GO" id="Q8N143">
    <property type="GO annotations" value="10 GO annotations based on evolutionary models"/>
</dbReference>
<dbReference type="PhylomeDB" id="Q8N143"/>
<dbReference type="TreeFam" id="TF330912"/>
<dbReference type="PathwayCommons" id="Q8N143"/>
<dbReference type="SignaLink" id="Q8N143"/>
<dbReference type="BioGRID-ORCS" id="255877">
    <property type="hits" value="10 hits in 1213 CRISPR screens"/>
</dbReference>
<dbReference type="GenomeRNAi" id="255877"/>
<dbReference type="Pharos" id="Q8N143">
    <property type="development level" value="Tbio"/>
</dbReference>
<dbReference type="PRO" id="PR:Q8N143"/>
<dbReference type="Proteomes" id="UP000005640">
    <property type="component" value="Chromosome 17"/>
</dbReference>
<dbReference type="RNAct" id="Q8N143">
    <property type="molecule type" value="protein"/>
</dbReference>
<dbReference type="Bgee" id="ENSG00000161940">
    <property type="expression patterns" value="Expressed in upper lobe of left lung and 148 other cell types or tissues"/>
</dbReference>
<dbReference type="ExpressionAtlas" id="Q8N143">
    <property type="expression patterns" value="baseline and differential"/>
</dbReference>
<dbReference type="GO" id="GO:0005654">
    <property type="term" value="C:nucleoplasm"/>
    <property type="evidence" value="ECO:0000318"/>
    <property type="project" value="GO_Central"/>
</dbReference>
<dbReference type="GO" id="GO:0001227">
    <property type="term" value="F:DNA-binding transcription repressor activity, RNA polymerase II-specific"/>
    <property type="evidence" value="ECO:0000318"/>
    <property type="project" value="GO_Central"/>
</dbReference>
<dbReference type="GO" id="GO:0000978">
    <property type="term" value="F:RNA polymerase II cis-regulatory region sequence-specific DNA binding"/>
    <property type="evidence" value="ECO:0000318"/>
    <property type="project" value="GO_Central"/>
</dbReference>
<dbReference type="GO" id="GO:1990837">
    <property type="term" value="F:sequence-specific double-stranded DNA binding"/>
    <property type="evidence" value="ECO:0000314"/>
    <property type="project" value="ARUK-UCL"/>
</dbReference>
<dbReference type="GO" id="GO:0008270">
    <property type="term" value="F:zinc ion binding"/>
    <property type="evidence" value="ECO:0007669"/>
    <property type="project" value="UniProtKB-KW"/>
</dbReference>
<dbReference type="GO" id="GO:0000122">
    <property type="term" value="P:negative regulation of transcription by RNA polymerase II"/>
    <property type="evidence" value="ECO:0000318"/>
    <property type="project" value="GO_Central"/>
</dbReference>
<dbReference type="GO" id="GO:0045595">
    <property type="term" value="P:regulation of cell differentiation"/>
    <property type="evidence" value="ECO:0000318"/>
    <property type="project" value="GO_Central"/>
</dbReference>
<dbReference type="GO" id="GO:0042127">
    <property type="term" value="P:regulation of cell population proliferation"/>
    <property type="evidence" value="ECO:0000318"/>
    <property type="project" value="GO_Central"/>
</dbReference>
<dbReference type="GO" id="GO:0001817">
    <property type="term" value="P:regulation of cytokine production"/>
    <property type="evidence" value="ECO:0000318"/>
    <property type="project" value="GO_Central"/>
</dbReference>
<dbReference type="GO" id="GO:0002682">
    <property type="term" value="P:regulation of immune system process"/>
    <property type="evidence" value="ECO:0000318"/>
    <property type="project" value="GO_Central"/>
</dbReference>
<dbReference type="GO" id="GO:0050727">
    <property type="term" value="P:regulation of inflammatory response"/>
    <property type="evidence" value="ECO:0000318"/>
    <property type="project" value="GO_Central"/>
</dbReference>
<dbReference type="GO" id="GO:0042092">
    <property type="term" value="P:type 2 immune response"/>
    <property type="evidence" value="ECO:0000318"/>
    <property type="project" value="GO_Central"/>
</dbReference>
<dbReference type="FunFam" id="3.30.710.10:FF:000097">
    <property type="entry name" value="B-cell CLL/lymphoma 6 member B protein"/>
    <property type="match status" value="1"/>
</dbReference>
<dbReference type="FunFam" id="3.30.160.60:FF:000065">
    <property type="entry name" value="B-cell CLL/lymphoma 6, member B"/>
    <property type="match status" value="1"/>
</dbReference>
<dbReference type="FunFam" id="3.30.160.60:FF:000105">
    <property type="entry name" value="B-cell CLL/lymphoma 6, member B"/>
    <property type="match status" value="2"/>
</dbReference>
<dbReference type="FunFam" id="3.30.160.60:FF:000289">
    <property type="entry name" value="B-cell CLL/lymphoma 6, member B"/>
    <property type="match status" value="1"/>
</dbReference>
<dbReference type="FunFam" id="3.30.160.60:FF:001344">
    <property type="entry name" value="Zinc finger protein 16 like"/>
    <property type="match status" value="1"/>
</dbReference>
<dbReference type="Gene3D" id="3.30.160.60">
    <property type="entry name" value="Classic Zinc Finger"/>
    <property type="match status" value="5"/>
</dbReference>
<dbReference type="Gene3D" id="3.30.710.10">
    <property type="entry name" value="Potassium Channel Kv1.1, Chain A"/>
    <property type="match status" value="1"/>
</dbReference>
<dbReference type="InterPro" id="IPR000210">
    <property type="entry name" value="BTB/POZ_dom"/>
</dbReference>
<dbReference type="InterPro" id="IPR011333">
    <property type="entry name" value="SKP1/BTB/POZ_sf"/>
</dbReference>
<dbReference type="InterPro" id="IPR036236">
    <property type="entry name" value="Znf_C2H2_sf"/>
</dbReference>
<dbReference type="InterPro" id="IPR013087">
    <property type="entry name" value="Znf_C2H2_type"/>
</dbReference>
<dbReference type="InterPro" id="IPR050457">
    <property type="entry name" value="ZnFinger_BTB_dom_contain"/>
</dbReference>
<dbReference type="PANTHER" id="PTHR46105">
    <property type="entry name" value="AGAP004733-PA"/>
    <property type="match status" value="1"/>
</dbReference>
<dbReference type="PANTHER" id="PTHR46105:SF28">
    <property type="entry name" value="ZINC FINGER PROTEIN 37-LIKE"/>
    <property type="match status" value="1"/>
</dbReference>
<dbReference type="Pfam" id="PF00651">
    <property type="entry name" value="BTB"/>
    <property type="match status" value="1"/>
</dbReference>
<dbReference type="Pfam" id="PF00096">
    <property type="entry name" value="zf-C2H2"/>
    <property type="match status" value="3"/>
</dbReference>
<dbReference type="SMART" id="SM00225">
    <property type="entry name" value="BTB"/>
    <property type="match status" value="1"/>
</dbReference>
<dbReference type="SMART" id="SM00355">
    <property type="entry name" value="ZnF_C2H2"/>
    <property type="match status" value="5"/>
</dbReference>
<dbReference type="SUPFAM" id="SSF57667">
    <property type="entry name" value="beta-beta-alpha zinc fingers"/>
    <property type="match status" value="3"/>
</dbReference>
<dbReference type="SUPFAM" id="SSF54695">
    <property type="entry name" value="POZ domain"/>
    <property type="match status" value="1"/>
</dbReference>
<dbReference type="PROSITE" id="PS50097">
    <property type="entry name" value="BTB"/>
    <property type="match status" value="1"/>
</dbReference>
<dbReference type="PROSITE" id="PS00028">
    <property type="entry name" value="ZINC_FINGER_C2H2_1"/>
    <property type="match status" value="5"/>
</dbReference>
<dbReference type="PROSITE" id="PS50157">
    <property type="entry name" value="ZINC_FINGER_C2H2_2"/>
    <property type="match status" value="5"/>
</dbReference>
<comment type="function">
    <text evidence="5">Acts as a sequence-specific transcriptional repressor in association with BCL6. May function in a narrow stage or be related to some events in the early B-cell development.</text>
</comment>
<comment type="subunit">
    <text evidence="1">Associates with BCL6 through the BTB domain.</text>
</comment>
<comment type="interaction">
    <interactant intactId="EBI-21899143">
        <id>Q8N143</id>
    </interactant>
    <interactant intactId="EBI-6690555">
        <id>Q9BR01</id>
        <label>SULT4A1</label>
    </interactant>
    <organismsDiffer>false</organismsDiffer>
    <experiments>2</experiments>
</comment>
<comment type="subcellular location">
    <subcellularLocation>
        <location evidence="1">Nucleus</location>
    </subcellularLocation>
</comment>
<comment type="tissue specificity">
    <text evidence="5">Ubiquitously expressed with higher expression found in heart and placenta.</text>
</comment>
<organism>
    <name type="scientific">Homo sapiens</name>
    <name type="common">Human</name>
    <dbReference type="NCBI Taxonomy" id="9606"/>
    <lineage>
        <taxon>Eukaryota</taxon>
        <taxon>Metazoa</taxon>
        <taxon>Chordata</taxon>
        <taxon>Craniata</taxon>
        <taxon>Vertebrata</taxon>
        <taxon>Euteleostomi</taxon>
        <taxon>Mammalia</taxon>
        <taxon>Eutheria</taxon>
        <taxon>Euarchontoglires</taxon>
        <taxon>Primates</taxon>
        <taxon>Haplorrhini</taxon>
        <taxon>Catarrhini</taxon>
        <taxon>Hominidae</taxon>
        <taxon>Homo</taxon>
    </lineage>
</organism>
<gene>
    <name type="primary">BCL6B</name>
    <name type="synonym">BAZF</name>
    <name type="synonym">ZNF62</name>
</gene>
<sequence>MGSPAAPEGALGYVREFTRHSSDVLGNLNELRLRGILTDVTLLVGGQPLRAHKAVLIACSGFFYSIFRGRAGVGVDVLSLPGGPEARGFAPLLDFMYTSRLRLSPATAPAVLAAATYLQMEHVVQACHRFIQASYEPLGISLRPLEAEPPTPPTAPPPGSPRRSEGHPDPPTESRSCSQGPPSPASPDPKACNWKKYKYIVLNSQASQAGSLVGERSSGQPCPQARLPSGDEASSSSSSSSSSSEEGPIPGPQSRLSPTAATVQFKCGAPASTPYLLTSQAQDTSGSPSERARPLPGSEFFSCQNCEAVAGCSSGLDSLVPGDEDKPYKCQLCRSSFRYKGNLASHRTVHTGEKPYHCSICGARFNRPANLKTHSRIHSGEKPYKCETCGSRFVQVAHLRAHVLIHTGEKPYPCPTCGTRFRHLQTLKSHVRIHTGEKPYHCDPCGLHFRHKSQLRLHLRQKHGAATNTKVHYHILGGP</sequence>
<protein>
    <recommendedName>
        <fullName>B-cell CLL/lymphoma 6 member B protein</fullName>
    </recommendedName>
    <alternativeName>
        <fullName>Bcl6-associated zinc finger protein</fullName>
    </alternativeName>
    <alternativeName>
        <fullName>Zinc finger protein 62</fullName>
    </alternativeName>
</protein>
<proteinExistence type="evidence at protein level"/>
<evidence type="ECO:0000250" key="1"/>
<evidence type="ECO:0000255" key="2">
    <source>
        <dbReference type="PROSITE-ProRule" id="PRU00037"/>
    </source>
</evidence>
<evidence type="ECO:0000255" key="3">
    <source>
        <dbReference type="PROSITE-ProRule" id="PRU00042"/>
    </source>
</evidence>
<evidence type="ECO:0000256" key="4">
    <source>
        <dbReference type="SAM" id="MobiDB-lite"/>
    </source>
</evidence>
<evidence type="ECO:0000269" key="5">
    <source>
    </source>
</evidence>
<evidence type="ECO:0000305" key="6"/>
<reference key="1">
    <citation type="journal article" date="2002" name="Biochem. Biophys. Res. Commun.">
        <title>Cloning and characterization of the human BAZF gene, a homologue of the BCL6 oncogene.</title>
        <authorList>
            <person name="Sakashita C."/>
            <person name="Fukuda T."/>
            <person name="Okabe S."/>
            <person name="Kobayashi H."/>
            <person name="Hirosawa S."/>
            <person name="Tokuhisa T."/>
            <person name="Miyasaka N."/>
            <person name="Miura O."/>
            <person name="Miki T."/>
        </authorList>
    </citation>
    <scope>NUCLEOTIDE SEQUENCE [GENOMIC DNA / MRNA]</scope>
    <scope>FUNCTION</scope>
    <scope>TISSUE SPECIFICITY</scope>
</reference>
<reference key="2">
    <citation type="journal article" date="2006" name="Nature">
        <title>DNA sequence of human chromosome 17 and analysis of rearrangement in the human lineage.</title>
        <authorList>
            <person name="Zody M.C."/>
            <person name="Garber M."/>
            <person name="Adams D.J."/>
            <person name="Sharpe T."/>
            <person name="Harrow J."/>
            <person name="Lupski J.R."/>
            <person name="Nicholson C."/>
            <person name="Searle S.M."/>
            <person name="Wilming L."/>
            <person name="Young S.K."/>
            <person name="Abouelleil A."/>
            <person name="Allen N.R."/>
            <person name="Bi W."/>
            <person name="Bloom T."/>
            <person name="Borowsky M.L."/>
            <person name="Bugalter B.E."/>
            <person name="Butler J."/>
            <person name="Chang J.L."/>
            <person name="Chen C.-K."/>
            <person name="Cook A."/>
            <person name="Corum B."/>
            <person name="Cuomo C.A."/>
            <person name="de Jong P.J."/>
            <person name="DeCaprio D."/>
            <person name="Dewar K."/>
            <person name="FitzGerald M."/>
            <person name="Gilbert J."/>
            <person name="Gibson R."/>
            <person name="Gnerre S."/>
            <person name="Goldstein S."/>
            <person name="Grafham D.V."/>
            <person name="Grocock R."/>
            <person name="Hafez N."/>
            <person name="Hagopian D.S."/>
            <person name="Hart E."/>
            <person name="Norman C.H."/>
            <person name="Humphray S."/>
            <person name="Jaffe D.B."/>
            <person name="Jones M."/>
            <person name="Kamal M."/>
            <person name="Khodiyar V.K."/>
            <person name="LaButti K."/>
            <person name="Laird G."/>
            <person name="Lehoczky J."/>
            <person name="Liu X."/>
            <person name="Lokyitsang T."/>
            <person name="Loveland J."/>
            <person name="Lui A."/>
            <person name="Macdonald P."/>
            <person name="Major J.E."/>
            <person name="Matthews L."/>
            <person name="Mauceli E."/>
            <person name="McCarroll S.A."/>
            <person name="Mihalev A.H."/>
            <person name="Mudge J."/>
            <person name="Nguyen C."/>
            <person name="Nicol R."/>
            <person name="O'Leary S.B."/>
            <person name="Osoegawa K."/>
            <person name="Schwartz D.C."/>
            <person name="Shaw-Smith C."/>
            <person name="Stankiewicz P."/>
            <person name="Steward C."/>
            <person name="Swarbreck D."/>
            <person name="Venkataraman V."/>
            <person name="Whittaker C.A."/>
            <person name="Yang X."/>
            <person name="Zimmer A.R."/>
            <person name="Bradley A."/>
            <person name="Hubbard T."/>
            <person name="Birren B.W."/>
            <person name="Rogers J."/>
            <person name="Lander E.S."/>
            <person name="Nusbaum C."/>
        </authorList>
    </citation>
    <scope>NUCLEOTIDE SEQUENCE [LARGE SCALE GENOMIC DNA]</scope>
</reference>
<reference key="3">
    <citation type="journal article" date="2004" name="Genome Res.">
        <title>The status, quality, and expansion of the NIH full-length cDNA project: the Mammalian Gene Collection (MGC).</title>
        <authorList>
            <consortium name="The MGC Project Team"/>
        </authorList>
    </citation>
    <scope>NUCLEOTIDE SEQUENCE [LARGE SCALE MRNA]</scope>
    <source>
        <tissue>Placenta</tissue>
    </source>
</reference>
<accession>Q8N143</accession>
<accession>Q6PCB4</accession>